<evidence type="ECO:0000305" key="1"/>
<keyword id="KW-0548">Nucleotidyltransferase</keyword>
<keyword id="KW-0808">Transferase</keyword>
<gene>
    <name type="primary">hasC1</name>
    <name type="synonym">hasC</name>
    <name type="ordered locus">SpyM3_1853</name>
</gene>
<comment type="catalytic activity">
    <reaction>
        <text>alpha-D-glucose 1-phosphate + UTP + H(+) = UDP-alpha-D-glucose + diphosphate</text>
        <dbReference type="Rhea" id="RHEA:19889"/>
        <dbReference type="ChEBI" id="CHEBI:15378"/>
        <dbReference type="ChEBI" id="CHEBI:33019"/>
        <dbReference type="ChEBI" id="CHEBI:46398"/>
        <dbReference type="ChEBI" id="CHEBI:58601"/>
        <dbReference type="ChEBI" id="CHEBI:58885"/>
        <dbReference type="EC" id="2.7.7.9"/>
    </reaction>
</comment>
<comment type="pathway">
    <text>Carbohydrate metabolism; nucleotide-sugar metabolism.</text>
</comment>
<comment type="similarity">
    <text evidence="1">Belongs to the UDPGP type 2 family.</text>
</comment>
<name>HASC1_STRP3</name>
<protein>
    <recommendedName>
        <fullName>UTP--glucose-1-phosphate uridylyltransferase 1</fullName>
        <ecNumber>2.7.7.9</ecNumber>
    </recommendedName>
    <alternativeName>
        <fullName>Alpha-D-glucosyl-1-phosphate uridylyltransferase 1</fullName>
    </alternativeName>
    <alternativeName>
        <fullName>UDP-glucose pyrophosphorylase 1</fullName>
        <shortName>UDPGP 1</shortName>
    </alternativeName>
    <alternativeName>
        <fullName>Uridine diphosphoglucose pyrophosphorylase 1</fullName>
    </alternativeName>
</protein>
<reference key="1">
    <citation type="journal article" date="2002" name="Proc. Natl. Acad. Sci. U.S.A.">
        <title>Genome sequence of a serotype M3 strain of group A Streptococcus: phage-encoded toxins, the high-virulence phenotype, and clone emergence.</title>
        <authorList>
            <person name="Beres S.B."/>
            <person name="Sylva G.L."/>
            <person name="Barbian K.D."/>
            <person name="Lei B."/>
            <person name="Hoff J.S."/>
            <person name="Mammarella N.D."/>
            <person name="Liu M.-Y."/>
            <person name="Smoot J.C."/>
            <person name="Porcella S.F."/>
            <person name="Parkins L.D."/>
            <person name="Campbell D.S."/>
            <person name="Smith T.M."/>
            <person name="McCormick J.K."/>
            <person name="Leung D.Y.M."/>
            <person name="Schlievert P.M."/>
            <person name="Musser J.M."/>
        </authorList>
    </citation>
    <scope>NUCLEOTIDE SEQUENCE [LARGE SCALE GENOMIC DNA]</scope>
    <source>
        <strain>ATCC BAA-595 / MGAS315</strain>
    </source>
</reference>
<feature type="chain" id="PRO_0000201369" description="UTP--glucose-1-phosphate uridylyltransferase 1">
    <location>
        <begin position="1"/>
        <end position="304"/>
    </location>
</feature>
<proteinExistence type="inferred from homology"/>
<sequence>MTKVRKAIIPAAGLGTRFLPATKALAKEMLPIVDKPTIQFIVEEALKSGIEEILVVTGKAKRSIEDHFDSNFELEYNLQAKGKNELLKLVDETTAINLHFIRQSHPRGLGDAVLQAKAFVGNEPFVVMLGDDLMDITNASAKPLTKQLMEDYDKTHASTIAVMKVPHEDVSSYGVIAPQGKAVKGLYSVDTFVEKPQPEDAPSDLAIIGRYLLTPEIFDILERQVPGAGNEVQLTDAIDTLNKTQRVFAREFKGNRYDVGDKFGFMKTSIDYALEHPQVKEDLKNYIIKLGKALEKSKVPTHSK</sequence>
<organism>
    <name type="scientific">Streptococcus pyogenes serotype M3 (strain ATCC BAA-595 / MGAS315)</name>
    <dbReference type="NCBI Taxonomy" id="198466"/>
    <lineage>
        <taxon>Bacteria</taxon>
        <taxon>Bacillati</taxon>
        <taxon>Bacillota</taxon>
        <taxon>Bacilli</taxon>
        <taxon>Lactobacillales</taxon>
        <taxon>Streptococcaceae</taxon>
        <taxon>Streptococcus</taxon>
    </lineage>
</organism>
<accession>P0DG70</accession>
<accession>Q79VY2</accession>
<accession>Q8K5G4</accession>
<dbReference type="EC" id="2.7.7.9"/>
<dbReference type="EMBL" id="AE014074">
    <property type="protein sequence ID" value="AAM80460.1"/>
    <property type="molecule type" value="Genomic_DNA"/>
</dbReference>
<dbReference type="RefSeq" id="WP_002982024.1">
    <property type="nucleotide sequence ID" value="NC_004070.1"/>
</dbReference>
<dbReference type="SMR" id="P0DG70"/>
<dbReference type="GeneID" id="69901620"/>
<dbReference type="KEGG" id="spg:SpyM3_1853"/>
<dbReference type="HOGENOM" id="CLU_029499_1_2_9"/>
<dbReference type="UniPathway" id="UPA00215"/>
<dbReference type="Proteomes" id="UP000000564">
    <property type="component" value="Chromosome"/>
</dbReference>
<dbReference type="GO" id="GO:0003983">
    <property type="term" value="F:UTP:glucose-1-phosphate uridylyltransferase activity"/>
    <property type="evidence" value="ECO:0007669"/>
    <property type="project" value="UniProtKB-EC"/>
</dbReference>
<dbReference type="GO" id="GO:0009058">
    <property type="term" value="P:biosynthetic process"/>
    <property type="evidence" value="ECO:0007669"/>
    <property type="project" value="InterPro"/>
</dbReference>
<dbReference type="GO" id="GO:0006011">
    <property type="term" value="P:UDP-alpha-D-glucose metabolic process"/>
    <property type="evidence" value="ECO:0007669"/>
    <property type="project" value="InterPro"/>
</dbReference>
<dbReference type="CDD" id="cd02541">
    <property type="entry name" value="UGPase_prokaryotic"/>
    <property type="match status" value="1"/>
</dbReference>
<dbReference type="Gene3D" id="3.90.550.10">
    <property type="entry name" value="Spore Coat Polysaccharide Biosynthesis Protein SpsA, Chain A"/>
    <property type="match status" value="1"/>
</dbReference>
<dbReference type="InterPro" id="IPR005771">
    <property type="entry name" value="GalU_uridylyltTrfase_bac/arc"/>
</dbReference>
<dbReference type="InterPro" id="IPR005835">
    <property type="entry name" value="NTP_transferase_dom"/>
</dbReference>
<dbReference type="InterPro" id="IPR029044">
    <property type="entry name" value="Nucleotide-diphossugar_trans"/>
</dbReference>
<dbReference type="NCBIfam" id="TIGR01099">
    <property type="entry name" value="galU"/>
    <property type="match status" value="1"/>
</dbReference>
<dbReference type="PANTHER" id="PTHR43197">
    <property type="entry name" value="UTP--GLUCOSE-1-PHOSPHATE URIDYLYLTRANSFERASE"/>
    <property type="match status" value="1"/>
</dbReference>
<dbReference type="PANTHER" id="PTHR43197:SF1">
    <property type="entry name" value="UTP--GLUCOSE-1-PHOSPHATE URIDYLYLTRANSFERASE"/>
    <property type="match status" value="1"/>
</dbReference>
<dbReference type="Pfam" id="PF00483">
    <property type="entry name" value="NTP_transferase"/>
    <property type="match status" value="1"/>
</dbReference>
<dbReference type="SUPFAM" id="SSF53448">
    <property type="entry name" value="Nucleotide-diphospho-sugar transferases"/>
    <property type="match status" value="1"/>
</dbReference>